<dbReference type="EMBL" id="CP000157">
    <property type="protein sequence ID" value="ABC63295.1"/>
    <property type="molecule type" value="Genomic_DNA"/>
</dbReference>
<dbReference type="RefSeq" id="WP_011414131.1">
    <property type="nucleotide sequence ID" value="NC_007722.1"/>
</dbReference>
<dbReference type="SMR" id="Q2NAJ6"/>
<dbReference type="STRING" id="314225.ELI_06015"/>
<dbReference type="KEGG" id="eli:ELI_06015"/>
<dbReference type="eggNOG" id="COG1420">
    <property type="taxonomic scope" value="Bacteria"/>
</dbReference>
<dbReference type="HOGENOM" id="CLU_050019_0_0_5"/>
<dbReference type="OrthoDB" id="9783139at2"/>
<dbReference type="Proteomes" id="UP000008808">
    <property type="component" value="Chromosome"/>
</dbReference>
<dbReference type="GO" id="GO:0003677">
    <property type="term" value="F:DNA binding"/>
    <property type="evidence" value="ECO:0007669"/>
    <property type="project" value="InterPro"/>
</dbReference>
<dbReference type="GO" id="GO:0045892">
    <property type="term" value="P:negative regulation of DNA-templated transcription"/>
    <property type="evidence" value="ECO:0007669"/>
    <property type="project" value="UniProtKB-UniRule"/>
</dbReference>
<dbReference type="Gene3D" id="3.30.450.40">
    <property type="match status" value="1"/>
</dbReference>
<dbReference type="Gene3D" id="3.30.390.60">
    <property type="entry name" value="Heat-inducible transcription repressor hrca homolog, domain 3"/>
    <property type="match status" value="1"/>
</dbReference>
<dbReference type="Gene3D" id="1.10.10.10">
    <property type="entry name" value="Winged helix-like DNA-binding domain superfamily/Winged helix DNA-binding domain"/>
    <property type="match status" value="1"/>
</dbReference>
<dbReference type="HAMAP" id="MF_00081">
    <property type="entry name" value="HrcA"/>
    <property type="match status" value="1"/>
</dbReference>
<dbReference type="InterPro" id="IPR029016">
    <property type="entry name" value="GAF-like_dom_sf"/>
</dbReference>
<dbReference type="InterPro" id="IPR002571">
    <property type="entry name" value="HrcA"/>
</dbReference>
<dbReference type="InterPro" id="IPR021153">
    <property type="entry name" value="HrcA_C"/>
</dbReference>
<dbReference type="InterPro" id="IPR036388">
    <property type="entry name" value="WH-like_DNA-bd_sf"/>
</dbReference>
<dbReference type="InterPro" id="IPR036390">
    <property type="entry name" value="WH_DNA-bd_sf"/>
</dbReference>
<dbReference type="InterPro" id="IPR023120">
    <property type="entry name" value="WHTH_transcript_rep_HrcA_IDD"/>
</dbReference>
<dbReference type="NCBIfam" id="TIGR00331">
    <property type="entry name" value="hrcA"/>
    <property type="match status" value="1"/>
</dbReference>
<dbReference type="PANTHER" id="PTHR34824">
    <property type="entry name" value="HEAT-INDUCIBLE TRANSCRIPTION REPRESSOR HRCA"/>
    <property type="match status" value="1"/>
</dbReference>
<dbReference type="PANTHER" id="PTHR34824:SF1">
    <property type="entry name" value="HEAT-INDUCIBLE TRANSCRIPTION REPRESSOR HRCA"/>
    <property type="match status" value="1"/>
</dbReference>
<dbReference type="Pfam" id="PF01628">
    <property type="entry name" value="HrcA"/>
    <property type="match status" value="1"/>
</dbReference>
<dbReference type="PIRSF" id="PIRSF005485">
    <property type="entry name" value="HrcA"/>
    <property type="match status" value="1"/>
</dbReference>
<dbReference type="SUPFAM" id="SSF55781">
    <property type="entry name" value="GAF domain-like"/>
    <property type="match status" value="1"/>
</dbReference>
<dbReference type="SUPFAM" id="SSF46785">
    <property type="entry name" value="Winged helix' DNA-binding domain"/>
    <property type="match status" value="1"/>
</dbReference>
<accession>Q2NAJ6</accession>
<reference key="1">
    <citation type="journal article" date="2009" name="J. Bacteriol.">
        <title>Complete genome sequence of Erythrobacter litoralis HTCC2594.</title>
        <authorList>
            <person name="Oh H.M."/>
            <person name="Giovannoni S.J."/>
            <person name="Ferriera S."/>
            <person name="Johnson J."/>
            <person name="Cho J.C."/>
        </authorList>
    </citation>
    <scope>NUCLEOTIDE SEQUENCE [LARGE SCALE GENOMIC DNA]</scope>
    <source>
        <strain>HTCC2594</strain>
    </source>
</reference>
<sequence>MAVPPVTELTDRARAIFQLVVEGYLESGQPVGSKTLSQEQSLDLSPASIRSVLADLESIGLLAAPHTSAGRMPTETGLRLFVDGMMQVAEPTRAEREAIAQRLKRSGPIEQALEATSSMLSDLSGAAGMVMVPSREPRLAQISLVPLGQGKALAVLVGEDGAIENRVIETGDTPAHVLEQVSNFITARLAGRTLAEATAAMRKEIADGKSALDTASQNLVERGLAVWTEDAAERPVLIVRGQANLLDESALEDLDRVRSLLDDLENKQSVAELLETARDAEATRIFIGSENRLFALSGSSVIASPYRDREGKVVGVLGVIGPTRLNYARVVPMVDFTARSLGKLIG</sequence>
<keyword id="KW-1185">Reference proteome</keyword>
<keyword id="KW-0678">Repressor</keyword>
<keyword id="KW-0346">Stress response</keyword>
<keyword id="KW-0804">Transcription</keyword>
<keyword id="KW-0805">Transcription regulation</keyword>
<gene>
    <name evidence="1" type="primary">hrcA</name>
    <name type="ordered locus">ELI_06015</name>
</gene>
<evidence type="ECO:0000255" key="1">
    <source>
        <dbReference type="HAMAP-Rule" id="MF_00081"/>
    </source>
</evidence>
<proteinExistence type="inferred from homology"/>
<comment type="function">
    <text evidence="1">Negative regulator of class I heat shock genes (grpE-dnaK-dnaJ and groELS operons). Prevents heat-shock induction of these operons.</text>
</comment>
<comment type="similarity">
    <text evidence="1">Belongs to the HrcA family.</text>
</comment>
<protein>
    <recommendedName>
        <fullName evidence="1">Heat-inducible transcription repressor HrcA</fullName>
    </recommendedName>
</protein>
<organism>
    <name type="scientific">Erythrobacter litoralis (strain HTCC2594)</name>
    <dbReference type="NCBI Taxonomy" id="314225"/>
    <lineage>
        <taxon>Bacteria</taxon>
        <taxon>Pseudomonadati</taxon>
        <taxon>Pseudomonadota</taxon>
        <taxon>Alphaproteobacteria</taxon>
        <taxon>Sphingomonadales</taxon>
        <taxon>Erythrobacteraceae</taxon>
        <taxon>Erythrobacter/Porphyrobacter group</taxon>
        <taxon>Erythrobacter</taxon>
    </lineage>
</organism>
<name>HRCA_ERYLH</name>
<feature type="chain" id="PRO_1000010407" description="Heat-inducible transcription repressor HrcA">
    <location>
        <begin position="1"/>
        <end position="346"/>
    </location>
</feature>